<comment type="function">
    <text evidence="1">Catalyzes the reversible interconversion of serine and glycine with tetrahydrofolate (THF) serving as the one-carbon carrier. This reaction serves as the major source of one-carbon groups required for the biosynthesis of purines, thymidylate, methionine, and other important biomolecules. Also exhibits THF-independent aldolase activity toward beta-hydroxyamino acids, producing glycine and aldehydes, via a retro-aldol mechanism.</text>
</comment>
<comment type="catalytic activity">
    <reaction evidence="1">
        <text>(6R)-5,10-methylene-5,6,7,8-tetrahydrofolate + glycine + H2O = (6S)-5,6,7,8-tetrahydrofolate + L-serine</text>
        <dbReference type="Rhea" id="RHEA:15481"/>
        <dbReference type="ChEBI" id="CHEBI:15377"/>
        <dbReference type="ChEBI" id="CHEBI:15636"/>
        <dbReference type="ChEBI" id="CHEBI:33384"/>
        <dbReference type="ChEBI" id="CHEBI:57305"/>
        <dbReference type="ChEBI" id="CHEBI:57453"/>
        <dbReference type="EC" id="2.1.2.1"/>
    </reaction>
</comment>
<comment type="cofactor">
    <cofactor evidence="1">
        <name>pyridoxal 5'-phosphate</name>
        <dbReference type="ChEBI" id="CHEBI:597326"/>
    </cofactor>
</comment>
<comment type="pathway">
    <text evidence="1">One-carbon metabolism; tetrahydrofolate interconversion.</text>
</comment>
<comment type="pathway">
    <text evidence="1">Amino-acid biosynthesis; glycine biosynthesis; glycine from L-serine: step 1/1.</text>
</comment>
<comment type="subunit">
    <text evidence="1">Homodimer.</text>
</comment>
<comment type="subcellular location">
    <subcellularLocation>
        <location evidence="1">Cytoplasm</location>
    </subcellularLocation>
</comment>
<comment type="similarity">
    <text evidence="1">Belongs to the SHMT family.</text>
</comment>
<accession>A5GIG4</accession>
<evidence type="ECO:0000255" key="1">
    <source>
        <dbReference type="HAMAP-Rule" id="MF_00051"/>
    </source>
</evidence>
<organism>
    <name type="scientific">Synechococcus sp. (strain WH7803)</name>
    <dbReference type="NCBI Taxonomy" id="32051"/>
    <lineage>
        <taxon>Bacteria</taxon>
        <taxon>Bacillati</taxon>
        <taxon>Cyanobacteriota</taxon>
        <taxon>Cyanophyceae</taxon>
        <taxon>Synechococcales</taxon>
        <taxon>Synechococcaceae</taxon>
        <taxon>Synechococcus</taxon>
    </lineage>
</organism>
<gene>
    <name evidence="1" type="primary">glyA</name>
    <name type="ordered locus">SynWH7803_0303</name>
</gene>
<feature type="chain" id="PRO_1000006338" description="Serine hydroxymethyltransferase">
    <location>
        <begin position="1"/>
        <end position="429"/>
    </location>
</feature>
<feature type="binding site" evidence="1">
    <location>
        <position position="126"/>
    </location>
    <ligand>
        <name>(6S)-5,6,7,8-tetrahydrofolate</name>
        <dbReference type="ChEBI" id="CHEBI:57453"/>
    </ligand>
</feature>
<feature type="binding site" evidence="1">
    <location>
        <begin position="130"/>
        <end position="132"/>
    </location>
    <ligand>
        <name>(6S)-5,6,7,8-tetrahydrofolate</name>
        <dbReference type="ChEBI" id="CHEBI:57453"/>
    </ligand>
</feature>
<feature type="binding site" evidence="1">
    <location>
        <begin position="359"/>
        <end position="361"/>
    </location>
    <ligand>
        <name>(6S)-5,6,7,8-tetrahydrofolate</name>
        <dbReference type="ChEBI" id="CHEBI:57453"/>
    </ligand>
</feature>
<feature type="site" description="Plays an important role in substrate specificity" evidence="1">
    <location>
        <position position="234"/>
    </location>
</feature>
<feature type="modified residue" description="N6-(pyridoxal phosphate)lysine" evidence="1">
    <location>
        <position position="235"/>
    </location>
</feature>
<proteinExistence type="inferred from homology"/>
<protein>
    <recommendedName>
        <fullName evidence="1">Serine hydroxymethyltransferase</fullName>
        <shortName evidence="1">SHMT</shortName>
        <shortName evidence="1">Serine methylase</shortName>
        <ecNumber evidence="1">2.1.2.1</ecNumber>
    </recommendedName>
</protein>
<name>GLYA_SYNPW</name>
<sequence length="429" mass="45954">MVDFETAPINAPLAESDPAIARLIDQERDRQETHLELIASENFASSAVMAAQGSVLTNKYAEGLPNKRYYGGCEHVDAIEDLAIERAKELFGAAWANVQPHSGAQANFAVFLALLQPGDTIMGLDLSHGGHLTHGSPVNVSGKWFNVVQYGVDKETQRLDMEAIRQLALEHKPKLIVCGFSAYPRTIDFAAFRAIADEVGAYLLADMAHIAGLVAAGVHPSPVPHCDVVTTTTHKTLRGPRGGLILCRDAEFAKKFDKAVFPGSQGGPLEHVIAAKAVAFGEALRPAFKAYSQQVVANAQALADRLMARGIDVVSGGTDNHVVLLDLRSIGMTGKVADLLVSDVHITANKNTVPFDPESPFVTSGLRLGTAALTTRGFDADAFAEVAEVIADRLLNPEDDAIQARCLERVASLCRRFPLYAMATEPALV</sequence>
<reference key="1">
    <citation type="submission" date="2006-05" db="EMBL/GenBank/DDBJ databases">
        <authorList>
            <consortium name="Genoscope"/>
        </authorList>
    </citation>
    <scope>NUCLEOTIDE SEQUENCE [LARGE SCALE GENOMIC DNA]</scope>
    <source>
        <strain>WH7803</strain>
    </source>
</reference>
<dbReference type="EC" id="2.1.2.1" evidence="1"/>
<dbReference type="EMBL" id="CT971583">
    <property type="protein sequence ID" value="CAK22729.1"/>
    <property type="molecule type" value="Genomic_DNA"/>
</dbReference>
<dbReference type="SMR" id="A5GIG4"/>
<dbReference type="STRING" id="32051.SynWH7803_0303"/>
<dbReference type="KEGG" id="syx:SynWH7803_0303"/>
<dbReference type="eggNOG" id="COG0112">
    <property type="taxonomic scope" value="Bacteria"/>
</dbReference>
<dbReference type="HOGENOM" id="CLU_022477_2_1_3"/>
<dbReference type="OrthoDB" id="9803846at2"/>
<dbReference type="UniPathway" id="UPA00193"/>
<dbReference type="UniPathway" id="UPA00288">
    <property type="reaction ID" value="UER01023"/>
</dbReference>
<dbReference type="Proteomes" id="UP000001566">
    <property type="component" value="Chromosome"/>
</dbReference>
<dbReference type="GO" id="GO:0005829">
    <property type="term" value="C:cytosol"/>
    <property type="evidence" value="ECO:0007669"/>
    <property type="project" value="TreeGrafter"/>
</dbReference>
<dbReference type="GO" id="GO:0004372">
    <property type="term" value="F:glycine hydroxymethyltransferase activity"/>
    <property type="evidence" value="ECO:0007669"/>
    <property type="project" value="UniProtKB-UniRule"/>
</dbReference>
<dbReference type="GO" id="GO:0030170">
    <property type="term" value="F:pyridoxal phosphate binding"/>
    <property type="evidence" value="ECO:0007669"/>
    <property type="project" value="UniProtKB-UniRule"/>
</dbReference>
<dbReference type="GO" id="GO:0019264">
    <property type="term" value="P:glycine biosynthetic process from serine"/>
    <property type="evidence" value="ECO:0007669"/>
    <property type="project" value="UniProtKB-UniRule"/>
</dbReference>
<dbReference type="GO" id="GO:0035999">
    <property type="term" value="P:tetrahydrofolate interconversion"/>
    <property type="evidence" value="ECO:0007669"/>
    <property type="project" value="UniProtKB-UniRule"/>
</dbReference>
<dbReference type="CDD" id="cd00378">
    <property type="entry name" value="SHMT"/>
    <property type="match status" value="1"/>
</dbReference>
<dbReference type="FunFam" id="3.40.640.10:FF:000001">
    <property type="entry name" value="Serine hydroxymethyltransferase"/>
    <property type="match status" value="1"/>
</dbReference>
<dbReference type="Gene3D" id="3.90.1150.10">
    <property type="entry name" value="Aspartate Aminotransferase, domain 1"/>
    <property type="match status" value="1"/>
</dbReference>
<dbReference type="Gene3D" id="3.40.640.10">
    <property type="entry name" value="Type I PLP-dependent aspartate aminotransferase-like (Major domain)"/>
    <property type="match status" value="1"/>
</dbReference>
<dbReference type="HAMAP" id="MF_00051">
    <property type="entry name" value="SHMT"/>
    <property type="match status" value="1"/>
</dbReference>
<dbReference type="InterPro" id="IPR015424">
    <property type="entry name" value="PyrdxlP-dep_Trfase"/>
</dbReference>
<dbReference type="InterPro" id="IPR015421">
    <property type="entry name" value="PyrdxlP-dep_Trfase_major"/>
</dbReference>
<dbReference type="InterPro" id="IPR015422">
    <property type="entry name" value="PyrdxlP-dep_Trfase_small"/>
</dbReference>
<dbReference type="InterPro" id="IPR001085">
    <property type="entry name" value="Ser_HO-MeTrfase"/>
</dbReference>
<dbReference type="InterPro" id="IPR049943">
    <property type="entry name" value="Ser_HO-MeTrfase-like"/>
</dbReference>
<dbReference type="InterPro" id="IPR019798">
    <property type="entry name" value="Ser_HO-MeTrfase_PLP_BS"/>
</dbReference>
<dbReference type="InterPro" id="IPR039429">
    <property type="entry name" value="SHMT-like_dom"/>
</dbReference>
<dbReference type="NCBIfam" id="NF000586">
    <property type="entry name" value="PRK00011.1"/>
    <property type="match status" value="1"/>
</dbReference>
<dbReference type="PANTHER" id="PTHR11680">
    <property type="entry name" value="SERINE HYDROXYMETHYLTRANSFERASE"/>
    <property type="match status" value="1"/>
</dbReference>
<dbReference type="PANTHER" id="PTHR11680:SF35">
    <property type="entry name" value="SERINE HYDROXYMETHYLTRANSFERASE 1"/>
    <property type="match status" value="1"/>
</dbReference>
<dbReference type="Pfam" id="PF00464">
    <property type="entry name" value="SHMT"/>
    <property type="match status" value="1"/>
</dbReference>
<dbReference type="PIRSF" id="PIRSF000412">
    <property type="entry name" value="SHMT"/>
    <property type="match status" value="1"/>
</dbReference>
<dbReference type="SUPFAM" id="SSF53383">
    <property type="entry name" value="PLP-dependent transferases"/>
    <property type="match status" value="1"/>
</dbReference>
<dbReference type="PROSITE" id="PS00096">
    <property type="entry name" value="SHMT"/>
    <property type="match status" value="1"/>
</dbReference>
<keyword id="KW-0028">Amino-acid biosynthesis</keyword>
<keyword id="KW-0963">Cytoplasm</keyword>
<keyword id="KW-0554">One-carbon metabolism</keyword>
<keyword id="KW-0663">Pyridoxal phosphate</keyword>
<keyword id="KW-1185">Reference proteome</keyword>
<keyword id="KW-0808">Transferase</keyword>